<organism>
    <name type="scientific">Oceanobacillus iheyensis (strain DSM 14371 / CIP 107618 / JCM 11309 / KCTC 3954 / HTE831)</name>
    <dbReference type="NCBI Taxonomy" id="221109"/>
    <lineage>
        <taxon>Bacteria</taxon>
        <taxon>Bacillati</taxon>
        <taxon>Bacillota</taxon>
        <taxon>Bacilli</taxon>
        <taxon>Bacillales</taxon>
        <taxon>Bacillaceae</taxon>
        <taxon>Oceanobacillus</taxon>
    </lineage>
</organism>
<evidence type="ECO:0000255" key="1">
    <source>
        <dbReference type="HAMAP-Rule" id="MF_01364"/>
    </source>
</evidence>
<evidence type="ECO:0000305" key="2"/>
<keyword id="KW-0479">Metal-binding</keyword>
<keyword id="KW-1185">Reference proteome</keyword>
<keyword id="KW-0687">Ribonucleoprotein</keyword>
<keyword id="KW-0689">Ribosomal protein</keyword>
<keyword id="KW-0694">RNA-binding</keyword>
<keyword id="KW-0699">rRNA-binding</keyword>
<keyword id="KW-0862">Zinc</keyword>
<name>RS14Z_OCEIH</name>
<protein>
    <recommendedName>
        <fullName evidence="1">Small ribosomal subunit protein uS14B</fullName>
    </recommendedName>
    <alternativeName>
        <fullName evidence="2">30S ribosomal protein S14 type Z</fullName>
    </alternativeName>
</protein>
<gene>
    <name evidence="1" type="primary">rpsZ</name>
    <name evidence="1" type="synonym">rpsN1</name>
    <name type="ordered locus">OB0132</name>
</gene>
<comment type="function">
    <text evidence="1">Binds 16S rRNA, required for the assembly of 30S particles and may also be responsible for determining the conformation of the 16S rRNA at the A site.</text>
</comment>
<comment type="cofactor">
    <cofactor evidence="1">
        <name>Zn(2+)</name>
        <dbReference type="ChEBI" id="CHEBI:29105"/>
    </cofactor>
    <text evidence="1">Binds 1 zinc ion per subunit.</text>
</comment>
<comment type="subunit">
    <text evidence="1">Part of the 30S ribosomal subunit. Contacts proteins S3 and S10.</text>
</comment>
<comment type="similarity">
    <text evidence="1">Belongs to the universal ribosomal protein uS14 family. Zinc-binding uS14 subfamily.</text>
</comment>
<sequence>MAKKSMIAKQKRPQKFKVQEYTRCERCGRPHSVIRKFKLCRICFRELAYKGQIPGVKKASW</sequence>
<proteinExistence type="inferred from homology"/>
<accession>Q8ETX0</accession>
<dbReference type="EMBL" id="BA000028">
    <property type="protein sequence ID" value="BAC12088.1"/>
    <property type="molecule type" value="Genomic_DNA"/>
</dbReference>
<dbReference type="SMR" id="Q8ETX0"/>
<dbReference type="STRING" id="221109.gene:10732322"/>
<dbReference type="KEGG" id="oih:OB0132"/>
<dbReference type="eggNOG" id="COG0199">
    <property type="taxonomic scope" value="Bacteria"/>
</dbReference>
<dbReference type="HOGENOM" id="CLU_139869_3_0_9"/>
<dbReference type="OrthoDB" id="9810484at2"/>
<dbReference type="PhylomeDB" id="Q8ETX0"/>
<dbReference type="Proteomes" id="UP000000822">
    <property type="component" value="Chromosome"/>
</dbReference>
<dbReference type="GO" id="GO:0015935">
    <property type="term" value="C:small ribosomal subunit"/>
    <property type="evidence" value="ECO:0007669"/>
    <property type="project" value="TreeGrafter"/>
</dbReference>
<dbReference type="GO" id="GO:0019843">
    <property type="term" value="F:rRNA binding"/>
    <property type="evidence" value="ECO:0007669"/>
    <property type="project" value="UniProtKB-UniRule"/>
</dbReference>
<dbReference type="GO" id="GO:0003735">
    <property type="term" value="F:structural constituent of ribosome"/>
    <property type="evidence" value="ECO:0007669"/>
    <property type="project" value="InterPro"/>
</dbReference>
<dbReference type="GO" id="GO:0008270">
    <property type="term" value="F:zinc ion binding"/>
    <property type="evidence" value="ECO:0007669"/>
    <property type="project" value="UniProtKB-UniRule"/>
</dbReference>
<dbReference type="GO" id="GO:0006412">
    <property type="term" value="P:translation"/>
    <property type="evidence" value="ECO:0007669"/>
    <property type="project" value="UniProtKB-UniRule"/>
</dbReference>
<dbReference type="FunFam" id="4.10.830.10:FF:000001">
    <property type="entry name" value="30S ribosomal protein S14 type Z"/>
    <property type="match status" value="1"/>
</dbReference>
<dbReference type="Gene3D" id="4.10.830.10">
    <property type="entry name" value="30s Ribosomal Protein S14, Chain N"/>
    <property type="match status" value="1"/>
</dbReference>
<dbReference type="HAMAP" id="MF_01364_B">
    <property type="entry name" value="Ribosomal_uS14_2_B"/>
    <property type="match status" value="1"/>
</dbReference>
<dbReference type="InterPro" id="IPR001209">
    <property type="entry name" value="Ribosomal_uS14"/>
</dbReference>
<dbReference type="InterPro" id="IPR023053">
    <property type="entry name" value="Ribosomal_uS14_bact"/>
</dbReference>
<dbReference type="InterPro" id="IPR018271">
    <property type="entry name" value="Ribosomal_uS14_CS"/>
</dbReference>
<dbReference type="InterPro" id="IPR043140">
    <property type="entry name" value="Ribosomal_uS14_sf"/>
</dbReference>
<dbReference type="NCBIfam" id="NF005974">
    <property type="entry name" value="PRK08061.1"/>
    <property type="match status" value="1"/>
</dbReference>
<dbReference type="PANTHER" id="PTHR19836">
    <property type="entry name" value="30S RIBOSOMAL PROTEIN S14"/>
    <property type="match status" value="1"/>
</dbReference>
<dbReference type="PANTHER" id="PTHR19836:SF26">
    <property type="entry name" value="SMALL RIBOSOMAL SUBUNIT PROTEIN US14B"/>
    <property type="match status" value="1"/>
</dbReference>
<dbReference type="Pfam" id="PF00253">
    <property type="entry name" value="Ribosomal_S14"/>
    <property type="match status" value="1"/>
</dbReference>
<dbReference type="SUPFAM" id="SSF57716">
    <property type="entry name" value="Glucocorticoid receptor-like (DNA-binding domain)"/>
    <property type="match status" value="1"/>
</dbReference>
<dbReference type="PROSITE" id="PS00527">
    <property type="entry name" value="RIBOSOMAL_S14"/>
    <property type="match status" value="1"/>
</dbReference>
<reference key="1">
    <citation type="journal article" date="2002" name="Nucleic Acids Res.">
        <title>Genome sequence of Oceanobacillus iheyensis isolated from the Iheya Ridge and its unexpected adaptive capabilities to extreme environments.</title>
        <authorList>
            <person name="Takami H."/>
            <person name="Takaki Y."/>
            <person name="Uchiyama I."/>
        </authorList>
    </citation>
    <scope>NUCLEOTIDE SEQUENCE [LARGE SCALE GENOMIC DNA]</scope>
    <source>
        <strain>DSM 14371 / CIP 107618 / JCM 11309 / KCTC 3954 / HTE831</strain>
    </source>
</reference>
<feature type="chain" id="PRO_0000269126" description="Small ribosomal subunit protein uS14B">
    <location>
        <begin position="1"/>
        <end position="61"/>
    </location>
</feature>
<feature type="binding site" evidence="1">
    <location>
        <position position="24"/>
    </location>
    <ligand>
        <name>Zn(2+)</name>
        <dbReference type="ChEBI" id="CHEBI:29105"/>
    </ligand>
</feature>
<feature type="binding site" evidence="1">
    <location>
        <position position="27"/>
    </location>
    <ligand>
        <name>Zn(2+)</name>
        <dbReference type="ChEBI" id="CHEBI:29105"/>
    </ligand>
</feature>
<feature type="binding site" evidence="1">
    <location>
        <position position="40"/>
    </location>
    <ligand>
        <name>Zn(2+)</name>
        <dbReference type="ChEBI" id="CHEBI:29105"/>
    </ligand>
</feature>
<feature type="binding site" evidence="1">
    <location>
        <position position="43"/>
    </location>
    <ligand>
        <name>Zn(2+)</name>
        <dbReference type="ChEBI" id="CHEBI:29105"/>
    </ligand>
</feature>